<accession>Q2RHH3</accession>
<dbReference type="EC" id="2.5.1.16" evidence="1"/>
<dbReference type="EMBL" id="CP000232">
    <property type="protein sequence ID" value="ABC20116.1"/>
    <property type="molecule type" value="Genomic_DNA"/>
</dbReference>
<dbReference type="RefSeq" id="YP_430659.1">
    <property type="nucleotide sequence ID" value="NC_007644.1"/>
</dbReference>
<dbReference type="SMR" id="Q2RHH3"/>
<dbReference type="STRING" id="264732.Moth_1816"/>
<dbReference type="EnsemblBacteria" id="ABC20116">
    <property type="protein sequence ID" value="ABC20116"/>
    <property type="gene ID" value="Moth_1816"/>
</dbReference>
<dbReference type="KEGG" id="mta:Moth_1816"/>
<dbReference type="PATRIC" id="fig|264732.11.peg.1967"/>
<dbReference type="eggNOG" id="COG0421">
    <property type="taxonomic scope" value="Bacteria"/>
</dbReference>
<dbReference type="HOGENOM" id="CLU_048199_0_0_9"/>
<dbReference type="OrthoDB" id="9793120at2"/>
<dbReference type="UniPathway" id="UPA00248">
    <property type="reaction ID" value="UER00314"/>
</dbReference>
<dbReference type="GO" id="GO:0005829">
    <property type="term" value="C:cytosol"/>
    <property type="evidence" value="ECO:0007669"/>
    <property type="project" value="TreeGrafter"/>
</dbReference>
<dbReference type="GO" id="GO:0004766">
    <property type="term" value="F:spermidine synthase activity"/>
    <property type="evidence" value="ECO:0007669"/>
    <property type="project" value="UniProtKB-UniRule"/>
</dbReference>
<dbReference type="GO" id="GO:0008295">
    <property type="term" value="P:spermidine biosynthetic process"/>
    <property type="evidence" value="ECO:0007669"/>
    <property type="project" value="UniProtKB-UniRule"/>
</dbReference>
<dbReference type="CDD" id="cd02440">
    <property type="entry name" value="AdoMet_MTases"/>
    <property type="match status" value="1"/>
</dbReference>
<dbReference type="Gene3D" id="2.30.140.10">
    <property type="entry name" value="Spermidine synthase, tetramerisation domain"/>
    <property type="match status" value="1"/>
</dbReference>
<dbReference type="Gene3D" id="3.40.50.150">
    <property type="entry name" value="Vaccinia Virus protein VP39"/>
    <property type="match status" value="1"/>
</dbReference>
<dbReference type="HAMAP" id="MF_00198">
    <property type="entry name" value="Spermidine_synth"/>
    <property type="match status" value="1"/>
</dbReference>
<dbReference type="InterPro" id="IPR030374">
    <property type="entry name" value="PABS"/>
</dbReference>
<dbReference type="InterPro" id="IPR030373">
    <property type="entry name" value="PABS_CS"/>
</dbReference>
<dbReference type="InterPro" id="IPR029063">
    <property type="entry name" value="SAM-dependent_MTases_sf"/>
</dbReference>
<dbReference type="InterPro" id="IPR001045">
    <property type="entry name" value="Spermi_synthase"/>
</dbReference>
<dbReference type="InterPro" id="IPR035246">
    <property type="entry name" value="Spermidine_synt_N"/>
</dbReference>
<dbReference type="InterPro" id="IPR037163">
    <property type="entry name" value="Spermidine_synt_N_sf"/>
</dbReference>
<dbReference type="NCBIfam" id="NF037959">
    <property type="entry name" value="MFS_SpdSyn"/>
    <property type="match status" value="1"/>
</dbReference>
<dbReference type="NCBIfam" id="NF002010">
    <property type="entry name" value="PRK00811.1"/>
    <property type="match status" value="1"/>
</dbReference>
<dbReference type="NCBIfam" id="TIGR00417">
    <property type="entry name" value="speE"/>
    <property type="match status" value="1"/>
</dbReference>
<dbReference type="PANTHER" id="PTHR11558:SF11">
    <property type="entry name" value="SPERMIDINE SYNTHASE"/>
    <property type="match status" value="1"/>
</dbReference>
<dbReference type="PANTHER" id="PTHR11558">
    <property type="entry name" value="SPERMIDINE/SPERMINE SYNTHASE"/>
    <property type="match status" value="1"/>
</dbReference>
<dbReference type="Pfam" id="PF17284">
    <property type="entry name" value="Spermine_synt_N"/>
    <property type="match status" value="1"/>
</dbReference>
<dbReference type="Pfam" id="PF01564">
    <property type="entry name" value="Spermine_synth"/>
    <property type="match status" value="1"/>
</dbReference>
<dbReference type="SUPFAM" id="SSF53335">
    <property type="entry name" value="S-adenosyl-L-methionine-dependent methyltransferases"/>
    <property type="match status" value="1"/>
</dbReference>
<dbReference type="PROSITE" id="PS01330">
    <property type="entry name" value="PABS_1"/>
    <property type="match status" value="1"/>
</dbReference>
<dbReference type="PROSITE" id="PS51006">
    <property type="entry name" value="PABS_2"/>
    <property type="match status" value="1"/>
</dbReference>
<proteinExistence type="inferred from homology"/>
<feature type="chain" id="PRO_1000197476" description="Polyamine aminopropyltransferase">
    <location>
        <begin position="1"/>
        <end position="283"/>
    </location>
</feature>
<feature type="domain" description="PABS" evidence="1">
    <location>
        <begin position="3"/>
        <end position="236"/>
    </location>
</feature>
<feature type="active site" description="Proton acceptor" evidence="1">
    <location>
        <position position="156"/>
    </location>
</feature>
<feature type="binding site" evidence="1">
    <location>
        <position position="32"/>
    </location>
    <ligand>
        <name>S-methyl-5'-thioadenosine</name>
        <dbReference type="ChEBI" id="CHEBI:17509"/>
    </ligand>
</feature>
<feature type="binding site" evidence="1">
    <location>
        <position position="63"/>
    </location>
    <ligand>
        <name>spermidine</name>
        <dbReference type="ChEBI" id="CHEBI:57834"/>
    </ligand>
</feature>
<feature type="binding site" evidence="1">
    <location>
        <position position="87"/>
    </location>
    <ligand>
        <name>spermidine</name>
        <dbReference type="ChEBI" id="CHEBI:57834"/>
    </ligand>
</feature>
<feature type="binding site" evidence="1">
    <location>
        <position position="107"/>
    </location>
    <ligand>
        <name>S-methyl-5'-thioadenosine</name>
        <dbReference type="ChEBI" id="CHEBI:17509"/>
    </ligand>
</feature>
<feature type="binding site" evidence="1">
    <location>
        <begin position="138"/>
        <end position="139"/>
    </location>
    <ligand>
        <name>S-methyl-5'-thioadenosine</name>
        <dbReference type="ChEBI" id="CHEBI:17509"/>
    </ligand>
</feature>
<feature type="binding site" evidence="1">
    <location>
        <begin position="156"/>
        <end position="159"/>
    </location>
    <ligand>
        <name>spermidine</name>
        <dbReference type="ChEBI" id="CHEBI:57834"/>
    </ligand>
</feature>
<feature type="binding site" evidence="1">
    <location>
        <position position="163"/>
    </location>
    <ligand>
        <name>S-methyl-5'-thioadenosine</name>
        <dbReference type="ChEBI" id="CHEBI:17509"/>
    </ligand>
</feature>
<gene>
    <name evidence="1" type="primary">speE</name>
    <name type="ordered locus">Moth_1816</name>
</gene>
<reference key="1">
    <citation type="journal article" date="2008" name="Environ. Microbiol.">
        <title>The complete genome sequence of Moorella thermoacetica (f. Clostridium thermoaceticum).</title>
        <authorList>
            <person name="Pierce E."/>
            <person name="Xie G."/>
            <person name="Barabote R.D."/>
            <person name="Saunders E."/>
            <person name="Han C.S."/>
            <person name="Detter J.C."/>
            <person name="Richardson P."/>
            <person name="Brettin T.S."/>
            <person name="Das A."/>
            <person name="Ljungdahl L.G."/>
            <person name="Ragsdale S.W."/>
        </authorList>
    </citation>
    <scope>NUCLEOTIDE SEQUENCE [LARGE SCALE GENOMIC DNA]</scope>
    <source>
        <strain>ATCC 39073 / JCM 9320</strain>
    </source>
</reference>
<sequence>MRGIWFSELQTPDLAISVRLNQTLHHEKTPYQELAVVDTEAYGRMLLLDNIIQTTVKDEFFYHEMIAHVPLNTHPNPRTALVIGGGDGGVVREIVKHPSIEKVTLVEIDARVVANAREYLPEIACGLDDARVEIRFEDGIEHVRQRENTYDVIIVDSTDPIGPAVGLFSAEFYRNVYRALKADGVFVAQTESPIFNSRLIRRIQRDLKEIFPIARLYLTTVPTYPGGLWAFSLGSKKYDPLEVDWRQAPKVATRYYTPAIHQAAFSLPPFVQEFLEAPEEEEF</sequence>
<name>SPEE_MOOTA</name>
<protein>
    <recommendedName>
        <fullName evidence="1">Polyamine aminopropyltransferase</fullName>
    </recommendedName>
    <alternativeName>
        <fullName evidence="1">Putrescine aminopropyltransferase</fullName>
        <shortName evidence="1">PAPT</shortName>
    </alternativeName>
    <alternativeName>
        <fullName evidence="1">Spermidine synthase</fullName>
        <shortName evidence="1">SPDS</shortName>
        <shortName evidence="1">SPDSY</shortName>
        <ecNumber evidence="1">2.5.1.16</ecNumber>
    </alternativeName>
</protein>
<organism>
    <name type="scientific">Moorella thermoacetica (strain ATCC 39073 / JCM 9320)</name>
    <dbReference type="NCBI Taxonomy" id="264732"/>
    <lineage>
        <taxon>Bacteria</taxon>
        <taxon>Bacillati</taxon>
        <taxon>Bacillota</taxon>
        <taxon>Clostridia</taxon>
        <taxon>Moorellales</taxon>
        <taxon>Moorellaceae</taxon>
        <taxon>Moorella</taxon>
    </lineage>
</organism>
<evidence type="ECO:0000255" key="1">
    <source>
        <dbReference type="HAMAP-Rule" id="MF_00198"/>
    </source>
</evidence>
<comment type="function">
    <text evidence="1">Catalyzes the irreversible transfer of a propylamine group from the amino donor S-adenosylmethioninamine (decarboxy-AdoMet) to putrescine (1,4-diaminobutane) to yield spermidine.</text>
</comment>
<comment type="catalytic activity">
    <reaction evidence="1">
        <text>S-adenosyl 3-(methylsulfanyl)propylamine + putrescine = S-methyl-5'-thioadenosine + spermidine + H(+)</text>
        <dbReference type="Rhea" id="RHEA:12721"/>
        <dbReference type="ChEBI" id="CHEBI:15378"/>
        <dbReference type="ChEBI" id="CHEBI:17509"/>
        <dbReference type="ChEBI" id="CHEBI:57443"/>
        <dbReference type="ChEBI" id="CHEBI:57834"/>
        <dbReference type="ChEBI" id="CHEBI:326268"/>
        <dbReference type="EC" id="2.5.1.16"/>
    </reaction>
</comment>
<comment type="pathway">
    <text evidence="1">Amine and polyamine biosynthesis; spermidine biosynthesis; spermidine from putrescine: step 1/1.</text>
</comment>
<comment type="subunit">
    <text evidence="1">Homodimer or homotetramer.</text>
</comment>
<comment type="subcellular location">
    <subcellularLocation>
        <location evidence="1">Cytoplasm</location>
    </subcellularLocation>
</comment>
<comment type="similarity">
    <text evidence="1">Belongs to the spermidine/spermine synthase family.</text>
</comment>
<keyword id="KW-0963">Cytoplasm</keyword>
<keyword id="KW-0620">Polyamine biosynthesis</keyword>
<keyword id="KW-0745">Spermidine biosynthesis</keyword>
<keyword id="KW-0808">Transferase</keyword>